<protein>
    <recommendedName>
        <fullName evidence="1">DNA-directed RNA polymerase subunit omega</fullName>
        <shortName evidence="1">RNAP omega subunit</shortName>
        <ecNumber evidence="1">2.7.7.6</ecNumber>
    </recommendedName>
    <alternativeName>
        <fullName evidence="1">RNA polymerase omega subunit</fullName>
    </alternativeName>
    <alternativeName>
        <fullName evidence="1">Transcriptase subunit omega</fullName>
    </alternativeName>
</protein>
<name>RPOZ_ACIBT</name>
<accession>A3M9H4</accession>
<comment type="function">
    <text evidence="1">Promotes RNA polymerase assembly. Latches the N- and C-terminal regions of the beta' subunit thereby facilitating its interaction with the beta and alpha subunits.</text>
</comment>
<comment type="catalytic activity">
    <reaction evidence="1">
        <text>RNA(n) + a ribonucleoside 5'-triphosphate = RNA(n+1) + diphosphate</text>
        <dbReference type="Rhea" id="RHEA:21248"/>
        <dbReference type="Rhea" id="RHEA-COMP:14527"/>
        <dbReference type="Rhea" id="RHEA-COMP:17342"/>
        <dbReference type="ChEBI" id="CHEBI:33019"/>
        <dbReference type="ChEBI" id="CHEBI:61557"/>
        <dbReference type="ChEBI" id="CHEBI:140395"/>
        <dbReference type="EC" id="2.7.7.6"/>
    </reaction>
</comment>
<comment type="subunit">
    <text evidence="1">The RNAP catalytic core consists of 2 alpha, 1 beta, 1 beta' and 1 omega subunit. When a sigma factor is associated with the core the holoenzyme is formed, which can initiate transcription.</text>
</comment>
<comment type="similarity">
    <text evidence="1">Belongs to the RNA polymerase subunit omega family.</text>
</comment>
<feature type="chain" id="PRO_1000005876" description="DNA-directed RNA polymerase subunit omega">
    <location>
        <begin position="1"/>
        <end position="92"/>
    </location>
</feature>
<evidence type="ECO:0000255" key="1">
    <source>
        <dbReference type="HAMAP-Rule" id="MF_00366"/>
    </source>
</evidence>
<dbReference type="EC" id="2.7.7.6" evidence="1"/>
<dbReference type="EMBL" id="CP000521">
    <property type="protein sequence ID" value="ABO13568.1"/>
    <property type="molecule type" value="Genomic_DNA"/>
</dbReference>
<dbReference type="RefSeq" id="WP_000135049.1">
    <property type="nucleotide sequence ID" value="NZ_CP053098.1"/>
</dbReference>
<dbReference type="SMR" id="A3M9H4"/>
<dbReference type="GeneID" id="92895409"/>
<dbReference type="KEGG" id="acb:A1S_3171"/>
<dbReference type="HOGENOM" id="CLU_125406_5_3_6"/>
<dbReference type="GO" id="GO:0000428">
    <property type="term" value="C:DNA-directed RNA polymerase complex"/>
    <property type="evidence" value="ECO:0007669"/>
    <property type="project" value="UniProtKB-KW"/>
</dbReference>
<dbReference type="GO" id="GO:0003677">
    <property type="term" value="F:DNA binding"/>
    <property type="evidence" value="ECO:0007669"/>
    <property type="project" value="UniProtKB-UniRule"/>
</dbReference>
<dbReference type="GO" id="GO:0003899">
    <property type="term" value="F:DNA-directed RNA polymerase activity"/>
    <property type="evidence" value="ECO:0007669"/>
    <property type="project" value="UniProtKB-UniRule"/>
</dbReference>
<dbReference type="GO" id="GO:0006351">
    <property type="term" value="P:DNA-templated transcription"/>
    <property type="evidence" value="ECO:0007669"/>
    <property type="project" value="UniProtKB-UniRule"/>
</dbReference>
<dbReference type="Gene3D" id="3.90.940.10">
    <property type="match status" value="1"/>
</dbReference>
<dbReference type="HAMAP" id="MF_00366">
    <property type="entry name" value="RNApol_bact_RpoZ"/>
    <property type="match status" value="1"/>
</dbReference>
<dbReference type="InterPro" id="IPR003716">
    <property type="entry name" value="DNA-dir_RNA_pol_omega"/>
</dbReference>
<dbReference type="InterPro" id="IPR006110">
    <property type="entry name" value="Pol_omega/Rpo6/RPB6"/>
</dbReference>
<dbReference type="InterPro" id="IPR036161">
    <property type="entry name" value="RPB6/omega-like_sf"/>
</dbReference>
<dbReference type="NCBIfam" id="TIGR00690">
    <property type="entry name" value="rpoZ"/>
    <property type="match status" value="1"/>
</dbReference>
<dbReference type="PANTHER" id="PTHR34476">
    <property type="entry name" value="DNA-DIRECTED RNA POLYMERASE SUBUNIT OMEGA"/>
    <property type="match status" value="1"/>
</dbReference>
<dbReference type="PANTHER" id="PTHR34476:SF1">
    <property type="entry name" value="DNA-DIRECTED RNA POLYMERASE SUBUNIT OMEGA"/>
    <property type="match status" value="1"/>
</dbReference>
<dbReference type="Pfam" id="PF01192">
    <property type="entry name" value="RNA_pol_Rpb6"/>
    <property type="match status" value="1"/>
</dbReference>
<dbReference type="SMART" id="SM01409">
    <property type="entry name" value="RNA_pol_Rpb6"/>
    <property type="match status" value="1"/>
</dbReference>
<dbReference type="SUPFAM" id="SSF63562">
    <property type="entry name" value="RPB6/omega subunit-like"/>
    <property type="match status" value="1"/>
</dbReference>
<organism>
    <name type="scientific">Acinetobacter baumannii (strain ATCC 17978 / DSM 105126 / CIP 53.77 / LMG 1025 / NCDC KC755 / 5377)</name>
    <dbReference type="NCBI Taxonomy" id="400667"/>
    <lineage>
        <taxon>Bacteria</taxon>
        <taxon>Pseudomonadati</taxon>
        <taxon>Pseudomonadota</taxon>
        <taxon>Gammaproteobacteria</taxon>
        <taxon>Moraxellales</taxon>
        <taxon>Moraxellaceae</taxon>
        <taxon>Acinetobacter</taxon>
        <taxon>Acinetobacter calcoaceticus/baumannii complex</taxon>
    </lineage>
</organism>
<keyword id="KW-0240">DNA-directed RNA polymerase</keyword>
<keyword id="KW-0548">Nucleotidyltransferase</keyword>
<keyword id="KW-0804">Transcription</keyword>
<keyword id="KW-0808">Transferase</keyword>
<sequence length="92" mass="10445">MARVTVEDCLDHVDNRFELVLVASKRARQLARQGMEPTVEWDNDKPTVVALREIAVGHVTKEILKQREQDYQTSSLDLALSTNSLNLEGFSF</sequence>
<reference key="1">
    <citation type="journal article" date="2007" name="Genes Dev.">
        <title>New insights into Acinetobacter baumannii pathogenesis revealed by high-density pyrosequencing and transposon mutagenesis.</title>
        <authorList>
            <person name="Smith M.G."/>
            <person name="Gianoulis T.A."/>
            <person name="Pukatzki S."/>
            <person name="Mekalanos J.J."/>
            <person name="Ornston L.N."/>
            <person name="Gerstein M."/>
            <person name="Snyder M."/>
        </authorList>
    </citation>
    <scope>NUCLEOTIDE SEQUENCE [LARGE SCALE GENOMIC DNA]</scope>
    <source>
        <strain>ATCC 17978 / DSM 105126 / CIP 53.77 / LMG 1025 / NCDC KC755 / 5377</strain>
    </source>
</reference>
<gene>
    <name evidence="1" type="primary">rpoZ</name>
    <name type="ordered locus">A1S_3171</name>
</gene>
<proteinExistence type="inferred from homology"/>